<comment type="function">
    <text evidence="5 6">Transcription factor which may be involved in the control of cell cycle progression by the RB1/E2F1 pathway and in B-cell differentiation.</text>
</comment>
<comment type="subunit">
    <text evidence="8 9 10">Homodimer. Heterodimer with ARID3B. Interacts with E2F1. Interacts with GTF2I and BTK.</text>
</comment>
<comment type="interaction">
    <interactant intactId="EBI-5458244">
        <id>Q99856</id>
    </interactant>
    <interactant intactId="EBI-17183751">
        <id>X5D778</id>
        <label>ANKRD11</label>
    </interactant>
    <organismsDiffer>false</organismsDiffer>
    <experiments>3</experiments>
</comment>
<comment type="interaction">
    <interactant intactId="EBI-5458244">
        <id>Q99856</id>
    </interactant>
    <interactant intactId="EBI-624835">
        <id>Q06187</id>
        <label>BTK</label>
    </interactant>
    <organismsDiffer>false</organismsDiffer>
    <experiments>3</experiments>
</comment>
<comment type="interaction">
    <interactant intactId="EBI-5458244">
        <id>Q99856</id>
    </interactant>
    <interactant intactId="EBI-948001">
        <id>Q15323</id>
        <label>KRT31</label>
    </interactant>
    <organismsDiffer>false</organismsDiffer>
    <experiments>3</experiments>
</comment>
<comment type="interaction">
    <interactant intactId="EBI-5458244">
        <id>Q99856</id>
    </interactant>
    <interactant intactId="EBI-1057615">
        <id>O15479</id>
        <label>MAGEB2</label>
    </interactant>
    <organismsDiffer>false</organismsDiffer>
    <experiments>3</experiments>
</comment>
<comment type="interaction">
    <interactant intactId="EBI-5458244">
        <id>Q99856</id>
    </interactant>
    <interactant intactId="EBI-751857">
        <id>O15481</id>
        <label>MAGEB4</label>
    </interactant>
    <organismsDiffer>false</organismsDiffer>
    <experiments>3</experiments>
</comment>
<comment type="interaction">
    <interactant intactId="EBI-5458244">
        <id>Q99856</id>
    </interactant>
    <interactant intactId="EBI-10288852">
        <id>Q9UBU8-2</id>
        <label>MORF4L1</label>
    </interactant>
    <organismsDiffer>false</organismsDiffer>
    <experiments>3</experiments>
</comment>
<comment type="interaction">
    <interactant intactId="EBI-5458244">
        <id>Q99856</id>
    </interactant>
    <interactant intactId="EBI-399257">
        <id>Q15014</id>
        <label>MORF4L2</label>
    </interactant>
    <organismsDiffer>false</organismsDiffer>
    <experiments>3</experiments>
</comment>
<comment type="interaction">
    <interactant intactId="EBI-5458244">
        <id>Q99856</id>
    </interactant>
    <interactant intactId="EBI-945833">
        <id>Q7Z3S9</id>
        <label>NOTCH2NLA</label>
    </interactant>
    <organismsDiffer>false</organismsDiffer>
    <experiments>3</experiments>
</comment>
<comment type="interaction">
    <interactant intactId="EBI-5458244">
        <id>Q99856</id>
    </interactant>
    <interactant intactId="EBI-12048237">
        <id>Q6BDI9</id>
        <label>REP15</label>
    </interactant>
    <organismsDiffer>false</organismsDiffer>
    <experiments>3</experiments>
</comment>
<comment type="interaction">
    <interactant intactId="EBI-5458244">
        <id>Q99856</id>
    </interactant>
    <interactant intactId="EBI-1049822">
        <id>O60220</id>
        <label>TIMM8A</label>
    </interactant>
    <organismsDiffer>false</organismsDiffer>
    <experiments>3</experiments>
</comment>
<comment type="interaction">
    <interactant intactId="EBI-5458244">
        <id>Q99856</id>
    </interactant>
    <interactant intactId="EBI-8636434">
        <id>Q5I0X7</id>
        <label>TTC32</label>
    </interactant>
    <organismsDiffer>false</organismsDiffer>
    <experiments>3</experiments>
</comment>
<comment type="interaction">
    <interactant intactId="EBI-5458244">
        <id>Q99856</id>
    </interactant>
    <interactant intactId="EBI-295222">
        <id>P23025</id>
        <label>XPA</label>
    </interactant>
    <organismsDiffer>false</organismsDiffer>
    <experiments>3</experiments>
</comment>
<comment type="subcellular location">
    <subcellularLocation>
        <location evidence="2 9">Nucleus</location>
    </subcellularLocation>
    <subcellularLocation>
        <location evidence="9">Cytoplasm</location>
    </subcellularLocation>
    <text>Shuttles between nucleus and cytoplasm.</text>
</comment>
<comment type="tissue specificity">
    <text>Widely expressed, with highest expression in skeletal muscle, thalamus, and colon.</text>
</comment>
<comment type="induction">
    <text evidence="6">By p53/TP53 following DNA damage.</text>
</comment>
<comment type="sequence caution" evidence="11">
    <conflict type="frameshift">
        <sequence resource="EMBL-CDS" id="AAW30734"/>
    </conflict>
</comment>
<evidence type="ECO:0000250" key="1"/>
<evidence type="ECO:0000255" key="2">
    <source>
        <dbReference type="PROSITE-ProRule" id="PRU00355"/>
    </source>
</evidence>
<evidence type="ECO:0000255" key="3">
    <source>
        <dbReference type="PROSITE-ProRule" id="PRU00819"/>
    </source>
</evidence>
<evidence type="ECO:0000256" key="4">
    <source>
        <dbReference type="SAM" id="MobiDB-lite"/>
    </source>
</evidence>
<evidence type="ECO:0000269" key="5">
    <source>
    </source>
</evidence>
<evidence type="ECO:0000269" key="6">
    <source>
    </source>
</evidence>
<evidence type="ECO:0000269" key="7">
    <source>
    </source>
</evidence>
<evidence type="ECO:0000269" key="8">
    <source>
    </source>
</evidence>
<evidence type="ECO:0000269" key="9">
    <source>
    </source>
</evidence>
<evidence type="ECO:0000269" key="10">
    <source>
    </source>
</evidence>
<evidence type="ECO:0000305" key="11"/>
<evidence type="ECO:0007744" key="12">
    <source>
    </source>
</evidence>
<evidence type="ECO:0007744" key="13">
    <source>
    </source>
</evidence>
<evidence type="ECO:0007744" key="14">
    <source>
    </source>
</evidence>
<evidence type="ECO:0007744" key="15">
    <source>
    </source>
</evidence>
<evidence type="ECO:0007744" key="16">
    <source>
    </source>
</evidence>
<evidence type="ECO:0007744" key="17">
    <source>
    </source>
</evidence>
<evidence type="ECO:0007744" key="18">
    <source>
    </source>
</evidence>
<evidence type="ECO:0007829" key="19">
    <source>
        <dbReference type="PDB" id="4LJX"/>
    </source>
</evidence>
<name>ARI3A_HUMAN</name>
<gene>
    <name type="primary">ARID3A</name>
    <name type="synonym">DRIL1</name>
    <name type="synonym">DRIL3</name>
    <name type="synonym">DRX</name>
    <name type="synonym">E2FBP1</name>
</gene>
<keyword id="KW-0002">3D-structure</keyword>
<keyword id="KW-0963">Cytoplasm</keyword>
<keyword id="KW-0238">DNA-binding</keyword>
<keyword id="KW-1017">Isopeptide bond</keyword>
<keyword id="KW-0539">Nucleus</keyword>
<keyword id="KW-0597">Phosphoprotein</keyword>
<keyword id="KW-1267">Proteomics identification</keyword>
<keyword id="KW-1185">Reference proteome</keyword>
<keyword id="KW-0804">Transcription</keyword>
<keyword id="KW-0805">Transcription regulation</keyword>
<keyword id="KW-0832">Ubl conjugation</keyword>
<organism>
    <name type="scientific">Homo sapiens</name>
    <name type="common">Human</name>
    <dbReference type="NCBI Taxonomy" id="9606"/>
    <lineage>
        <taxon>Eukaryota</taxon>
        <taxon>Metazoa</taxon>
        <taxon>Chordata</taxon>
        <taxon>Craniata</taxon>
        <taxon>Vertebrata</taxon>
        <taxon>Euteleostomi</taxon>
        <taxon>Mammalia</taxon>
        <taxon>Eutheria</taxon>
        <taxon>Euarchontoglires</taxon>
        <taxon>Primates</taxon>
        <taxon>Haplorrhini</taxon>
        <taxon>Catarrhini</taxon>
        <taxon>Hominidae</taxon>
        <taxon>Homo</taxon>
    </lineage>
</organism>
<proteinExistence type="evidence at protein level"/>
<sequence length="593" mass="62889">MKLQAVMETLLQRQQRARQELEARQQLPPDPPAAPPGRARAAPDEDREPESARMQRAQMAALAAMRAAAAGLGHPASPGGSEDGPPGSEEEDAAREGTPGSPGRGREGPGEEHFEDMASDEDMKPKWEEEEMEEDLGEDEEEEEEDYEDEEEEEDEEGLGPPGPASLGTTALFPRKAQPPQAFRGDGVPRVLGGQERPGPGPAHPGGAAHVAPQLQPPDHGDWTYEEQFKQLYELDGDPKRKEFLDDLFSFMQKRGTPVNRIPIMAKQVLDLFMLYVLVTEKGGLVEVINKKLWREITKGLNLPTSITSAAFTLRTQYMKYLYPYECEKRGLSNPNELQAAIDSNRREGRRQSFGGSLFAYSPGGAHGMLSSPKLPVSSLGLAASTNGSSITPAPKIKKEEDSAIPITVPGRLPVSLAGHPVVAAQAAAVQAAAAQAAVAAQAAALEQLREKLESAEPPEKKMALVADEQQRLMQRALQQNFLAMAAQLPMSIRINSQASESRQDSAVNLTGTNGSNSISMSVEINGIMYTGVLFAQPPAPTPTSAPNKGGGGGGGSSSNAGGRGGNTGTSGGQAGPAGLSTPSTSTSNNSLP</sequence>
<accession>Q99856</accession>
<accession>Q5I858</accession>
<accession>Q6P9C6</accession>
<accession>Q8IZA7</accession>
<accession>Q8N4Z3</accession>
<dbReference type="EMBL" id="U88047">
    <property type="protein sequence ID" value="AAC32888.1"/>
    <property type="molecule type" value="mRNA"/>
</dbReference>
<dbReference type="EMBL" id="AF039850">
    <property type="protein sequence ID" value="AAC69994.1"/>
    <property type="molecule type" value="Genomic_DNA"/>
</dbReference>
<dbReference type="EMBL" id="AF039844">
    <property type="protein sequence ID" value="AAC69994.1"/>
    <property type="status" value="JOINED"/>
    <property type="molecule type" value="Genomic_DNA"/>
</dbReference>
<dbReference type="EMBL" id="AF039845">
    <property type="protein sequence ID" value="AAC69994.1"/>
    <property type="status" value="JOINED"/>
    <property type="molecule type" value="Genomic_DNA"/>
</dbReference>
<dbReference type="EMBL" id="AF039846">
    <property type="protein sequence ID" value="AAC69994.1"/>
    <property type="status" value="JOINED"/>
    <property type="molecule type" value="Genomic_DNA"/>
</dbReference>
<dbReference type="EMBL" id="AF039847">
    <property type="protein sequence ID" value="AAC69994.1"/>
    <property type="status" value="JOINED"/>
    <property type="molecule type" value="Genomic_DNA"/>
</dbReference>
<dbReference type="EMBL" id="AF039848">
    <property type="protein sequence ID" value="AAC69994.1"/>
    <property type="status" value="JOINED"/>
    <property type="molecule type" value="Genomic_DNA"/>
</dbReference>
<dbReference type="EMBL" id="AF039849">
    <property type="protein sequence ID" value="AAC69994.1"/>
    <property type="status" value="JOINED"/>
    <property type="molecule type" value="Genomic_DNA"/>
</dbReference>
<dbReference type="EMBL" id="AY152547">
    <property type="protein sequence ID" value="AAN74028.1"/>
    <property type="molecule type" value="mRNA"/>
</dbReference>
<dbReference type="EMBL" id="AY845638">
    <property type="protein sequence ID" value="AAW30734.1"/>
    <property type="status" value="ALT_FRAME"/>
    <property type="molecule type" value="mRNA"/>
</dbReference>
<dbReference type="EMBL" id="AC005391">
    <property type="protein sequence ID" value="AAC28918.1"/>
    <property type="molecule type" value="Genomic_DNA"/>
</dbReference>
<dbReference type="EMBL" id="AC005379">
    <property type="protein sequence ID" value="AAC28499.1"/>
    <property type="molecule type" value="Genomic_DNA"/>
</dbReference>
<dbReference type="EMBL" id="BC033163">
    <property type="protein sequence ID" value="AAH33163.1"/>
    <property type="molecule type" value="mRNA"/>
</dbReference>
<dbReference type="EMBL" id="BC060828">
    <property type="protein sequence ID" value="AAH60828.1"/>
    <property type="molecule type" value="mRNA"/>
</dbReference>
<dbReference type="CCDS" id="CCDS12050.1"/>
<dbReference type="RefSeq" id="NP_005215.1">
    <property type="nucleotide sequence ID" value="NM_005224.3"/>
</dbReference>
<dbReference type="RefSeq" id="XP_005259570.1">
    <property type="nucleotide sequence ID" value="XM_005259513.6"/>
</dbReference>
<dbReference type="RefSeq" id="XP_005259571.1">
    <property type="nucleotide sequence ID" value="XM_005259514.5"/>
</dbReference>
<dbReference type="RefSeq" id="XP_016881934.1">
    <property type="nucleotide sequence ID" value="XM_017026445.2"/>
</dbReference>
<dbReference type="PDB" id="2KK0">
    <property type="method" value="NMR"/>
    <property type="chains" value="A=218-351"/>
</dbReference>
<dbReference type="PDB" id="4LJX">
    <property type="method" value="X-ray"/>
    <property type="resolution" value="2.21 A"/>
    <property type="chains" value="A/B=216-351"/>
</dbReference>
<dbReference type="PDBsum" id="2KK0"/>
<dbReference type="PDBsum" id="4LJX"/>
<dbReference type="BMRB" id="Q99856"/>
<dbReference type="SMR" id="Q99856"/>
<dbReference type="BioGRID" id="108154">
    <property type="interactions" value="123"/>
</dbReference>
<dbReference type="FunCoup" id="Q99856">
    <property type="interactions" value="2309"/>
</dbReference>
<dbReference type="IntAct" id="Q99856">
    <property type="interactions" value="89"/>
</dbReference>
<dbReference type="MINT" id="Q99856"/>
<dbReference type="STRING" id="9606.ENSP00000263620"/>
<dbReference type="GlyGen" id="Q99856">
    <property type="glycosylation" value="6 sites, 1 O-linked glycan (4 sites)"/>
</dbReference>
<dbReference type="iPTMnet" id="Q99856"/>
<dbReference type="MetOSite" id="Q99856"/>
<dbReference type="PhosphoSitePlus" id="Q99856"/>
<dbReference type="SwissPalm" id="Q99856"/>
<dbReference type="BioMuta" id="ARID3A"/>
<dbReference type="DMDM" id="12230034"/>
<dbReference type="jPOST" id="Q99856"/>
<dbReference type="MassIVE" id="Q99856"/>
<dbReference type="PaxDb" id="9606-ENSP00000263620"/>
<dbReference type="PeptideAtlas" id="Q99856"/>
<dbReference type="ProteomicsDB" id="78506"/>
<dbReference type="Pumba" id="Q99856"/>
<dbReference type="ABCD" id="Q99856">
    <property type="antibodies" value="2 sequenced antibodies"/>
</dbReference>
<dbReference type="Antibodypedia" id="1435">
    <property type="antibodies" value="283 antibodies from 34 providers"/>
</dbReference>
<dbReference type="DNASU" id="1820"/>
<dbReference type="Ensembl" id="ENST00000263620.8">
    <property type="protein sequence ID" value="ENSP00000263620.2"/>
    <property type="gene ID" value="ENSG00000116017.11"/>
</dbReference>
<dbReference type="GeneID" id="1820"/>
<dbReference type="KEGG" id="hsa:1820"/>
<dbReference type="MANE-Select" id="ENST00000263620.8">
    <property type="protein sequence ID" value="ENSP00000263620.2"/>
    <property type="RefSeq nucleotide sequence ID" value="NM_005224.3"/>
    <property type="RefSeq protein sequence ID" value="NP_005215.1"/>
</dbReference>
<dbReference type="UCSC" id="uc002lql.4">
    <property type="organism name" value="human"/>
</dbReference>
<dbReference type="AGR" id="HGNC:3031"/>
<dbReference type="CTD" id="1820"/>
<dbReference type="DisGeNET" id="1820"/>
<dbReference type="GeneCards" id="ARID3A"/>
<dbReference type="HGNC" id="HGNC:3031">
    <property type="gene designation" value="ARID3A"/>
</dbReference>
<dbReference type="HPA" id="ENSG00000116017">
    <property type="expression patterns" value="Tissue enhanced (placenta, testis)"/>
</dbReference>
<dbReference type="MIM" id="603265">
    <property type="type" value="gene"/>
</dbReference>
<dbReference type="neXtProt" id="NX_Q99856"/>
<dbReference type="OpenTargets" id="ENSG00000116017"/>
<dbReference type="PharmGKB" id="PA27485"/>
<dbReference type="VEuPathDB" id="HostDB:ENSG00000116017"/>
<dbReference type="eggNOG" id="KOG2744">
    <property type="taxonomic scope" value="Eukaryota"/>
</dbReference>
<dbReference type="GeneTree" id="ENSGT00940000160899"/>
<dbReference type="HOGENOM" id="CLU_026952_3_0_1"/>
<dbReference type="InParanoid" id="Q99856"/>
<dbReference type="OMA" id="MKPKWEE"/>
<dbReference type="OrthoDB" id="10044343at2759"/>
<dbReference type="PAN-GO" id="Q99856">
    <property type="GO annotations" value="3 GO annotations based on evolutionary models"/>
</dbReference>
<dbReference type="PhylomeDB" id="Q99856"/>
<dbReference type="TreeFam" id="TF320364"/>
<dbReference type="PathwayCommons" id="Q99856"/>
<dbReference type="Reactome" id="R-HSA-6804116">
    <property type="pathway name" value="TP53 Regulates Transcription of Genes Involved in G1 Cell Cycle Arrest"/>
</dbReference>
<dbReference type="SignaLink" id="Q99856"/>
<dbReference type="SIGNOR" id="Q99856"/>
<dbReference type="BioGRID-ORCS" id="1820">
    <property type="hits" value="181 hits in 1182 CRISPR screens"/>
</dbReference>
<dbReference type="ChiTaRS" id="ARID3A">
    <property type="organism name" value="human"/>
</dbReference>
<dbReference type="EvolutionaryTrace" id="Q99856"/>
<dbReference type="GeneWiki" id="ARID3A"/>
<dbReference type="GenomeRNAi" id="1820"/>
<dbReference type="Pharos" id="Q99856">
    <property type="development level" value="Tbio"/>
</dbReference>
<dbReference type="PRO" id="PR:Q99856"/>
<dbReference type="Proteomes" id="UP000005640">
    <property type="component" value="Chromosome 19"/>
</dbReference>
<dbReference type="RNAct" id="Q99856">
    <property type="molecule type" value="protein"/>
</dbReference>
<dbReference type="Bgee" id="ENSG00000116017">
    <property type="expression patterns" value="Expressed in monocyte and 114 other cell types or tissues"/>
</dbReference>
<dbReference type="ExpressionAtlas" id="Q99856">
    <property type="expression patterns" value="baseline and differential"/>
</dbReference>
<dbReference type="GO" id="GO:0005829">
    <property type="term" value="C:cytosol"/>
    <property type="evidence" value="ECO:0000314"/>
    <property type="project" value="HPA"/>
</dbReference>
<dbReference type="GO" id="GO:0045121">
    <property type="term" value="C:membrane raft"/>
    <property type="evidence" value="ECO:0000314"/>
    <property type="project" value="MGI"/>
</dbReference>
<dbReference type="GO" id="GO:0005654">
    <property type="term" value="C:nucleoplasm"/>
    <property type="evidence" value="ECO:0000314"/>
    <property type="project" value="HPA"/>
</dbReference>
<dbReference type="GO" id="GO:0005634">
    <property type="term" value="C:nucleus"/>
    <property type="evidence" value="ECO:0000318"/>
    <property type="project" value="GO_Central"/>
</dbReference>
<dbReference type="GO" id="GO:0003682">
    <property type="term" value="F:chromatin binding"/>
    <property type="evidence" value="ECO:0007669"/>
    <property type="project" value="Ensembl"/>
</dbReference>
<dbReference type="GO" id="GO:0003677">
    <property type="term" value="F:DNA binding"/>
    <property type="evidence" value="ECO:0000318"/>
    <property type="project" value="GO_Central"/>
</dbReference>
<dbReference type="GO" id="GO:0042802">
    <property type="term" value="F:identical protein binding"/>
    <property type="evidence" value="ECO:0007669"/>
    <property type="project" value="Ensembl"/>
</dbReference>
<dbReference type="GO" id="GO:0003712">
    <property type="term" value="F:transcription coregulator activity"/>
    <property type="evidence" value="ECO:0007669"/>
    <property type="project" value="Ensembl"/>
</dbReference>
<dbReference type="GO" id="GO:0045944">
    <property type="term" value="P:positive regulation of transcription by RNA polymerase II"/>
    <property type="evidence" value="ECO:0007669"/>
    <property type="project" value="Ensembl"/>
</dbReference>
<dbReference type="GO" id="GO:0006357">
    <property type="term" value="P:regulation of transcription by RNA polymerase II"/>
    <property type="evidence" value="ECO:0000318"/>
    <property type="project" value="GO_Central"/>
</dbReference>
<dbReference type="CDD" id="cd16878">
    <property type="entry name" value="ARID_ARID3A"/>
    <property type="match status" value="1"/>
</dbReference>
<dbReference type="FunFam" id="1.10.150.60:FF:000006">
    <property type="entry name" value="AT-rich interactive domain-containing protein 3A"/>
    <property type="match status" value="1"/>
</dbReference>
<dbReference type="Gene3D" id="1.10.150.60">
    <property type="entry name" value="ARID DNA-binding domain"/>
    <property type="match status" value="1"/>
</dbReference>
<dbReference type="InterPro" id="IPR045147">
    <property type="entry name" value="ARI3A/B/C"/>
</dbReference>
<dbReference type="InterPro" id="IPR001606">
    <property type="entry name" value="ARID_dom"/>
</dbReference>
<dbReference type="InterPro" id="IPR036431">
    <property type="entry name" value="ARID_dom_sf"/>
</dbReference>
<dbReference type="InterPro" id="IPR023334">
    <property type="entry name" value="REKLES_domain"/>
</dbReference>
<dbReference type="PANTHER" id="PTHR15348:SF1">
    <property type="entry name" value="AT-RICH INTERACTIVE DOMAIN-CONTAINING PROTEIN 3A"/>
    <property type="match status" value="1"/>
</dbReference>
<dbReference type="PANTHER" id="PTHR15348">
    <property type="entry name" value="AT-RICH INTERACTIVE DOMAIN-CONTAINING PROTEIN ARID DOMAIN- CONTAINING PROTEIN DEAD RINGER PROTEIN B-CELL REGULATOR OF IGH TRANSCRIPTION BRIGHT"/>
    <property type="match status" value="1"/>
</dbReference>
<dbReference type="Pfam" id="PF01388">
    <property type="entry name" value="ARID"/>
    <property type="match status" value="1"/>
</dbReference>
<dbReference type="SMART" id="SM01014">
    <property type="entry name" value="ARID"/>
    <property type="match status" value="1"/>
</dbReference>
<dbReference type="SMART" id="SM00501">
    <property type="entry name" value="BRIGHT"/>
    <property type="match status" value="1"/>
</dbReference>
<dbReference type="SUPFAM" id="SSF46774">
    <property type="entry name" value="ARID-like"/>
    <property type="match status" value="1"/>
</dbReference>
<dbReference type="PROSITE" id="PS51011">
    <property type="entry name" value="ARID"/>
    <property type="match status" value="1"/>
</dbReference>
<dbReference type="PROSITE" id="PS51486">
    <property type="entry name" value="REKLES"/>
    <property type="match status" value="1"/>
</dbReference>
<reference key="1">
    <citation type="journal article" date="1998" name="Genomics">
        <title>The human dead ringer/bright homolog, DRIL1: cDNA cloning, gene structure, and mapping to D19S886, a marker on 19p13.3 that is strictly linked to the Peutz-Jeghers syndrome.</title>
        <authorList>
            <person name="Kortschak R.D."/>
            <person name="Reimann H."/>
            <person name="Zimmer M."/>
            <person name="Eyre H.J."/>
            <person name="Saint R."/>
            <person name="Jenne D.E."/>
        </authorList>
    </citation>
    <scope>NUCLEOTIDE SEQUENCE [GENOMIC DNA / MRNA]</scope>
</reference>
<reference key="2">
    <citation type="journal article" date="1998" name="Oncogene">
        <title>A novel E2F binding protein with Myc-type HLH motif stimulates E2F-dependent transcription by forming a heterodimer.</title>
        <authorList>
            <person name="Suzuki M."/>
            <person name="Okuyama S."/>
            <person name="Okamoto S."/>
            <person name="Shirasuna K."/>
            <person name="Nakajima T."/>
            <person name="Hachiya T."/>
            <person name="Nojima H."/>
            <person name="Sekiya S."/>
            <person name="Oda K."/>
        </authorList>
    </citation>
    <scope>NUCLEOTIDE SEQUENCE [MRNA]</scope>
    <scope>INTERACTION WITH E2F1</scope>
    <scope>VARIANT SER-556</scope>
</reference>
<reference key="3">
    <citation type="submission" date="2004-12" db="EMBL/GenBank/DDBJ databases">
        <title>Molecular cloning and immunologic characterization of DRIL3, a new bright-like ARID protein expressed in both myeloid and lymphoid cells, shares homology to E2FBP1/pRB family complexes.</title>
        <authorList>
            <person name="Paulin Y.G."/>
            <person name="Frank R.T."/>
            <person name="Davy E.J."/>
        </authorList>
    </citation>
    <scope>NUCLEOTIDE SEQUENCE [MRNA]</scope>
    <source>
        <tissue>Placenta</tissue>
    </source>
</reference>
<reference key="4">
    <citation type="journal article" date="2004" name="Nature">
        <title>The DNA sequence and biology of human chromosome 19.</title>
        <authorList>
            <person name="Grimwood J."/>
            <person name="Gordon L.A."/>
            <person name="Olsen A.S."/>
            <person name="Terry A."/>
            <person name="Schmutz J."/>
            <person name="Lamerdin J.E."/>
            <person name="Hellsten U."/>
            <person name="Goodstein D."/>
            <person name="Couronne O."/>
            <person name="Tran-Gyamfi M."/>
            <person name="Aerts A."/>
            <person name="Altherr M."/>
            <person name="Ashworth L."/>
            <person name="Bajorek E."/>
            <person name="Black S."/>
            <person name="Branscomb E."/>
            <person name="Caenepeel S."/>
            <person name="Carrano A.V."/>
            <person name="Caoile C."/>
            <person name="Chan Y.M."/>
            <person name="Christensen M."/>
            <person name="Cleland C.A."/>
            <person name="Copeland A."/>
            <person name="Dalin E."/>
            <person name="Dehal P."/>
            <person name="Denys M."/>
            <person name="Detter J.C."/>
            <person name="Escobar J."/>
            <person name="Flowers D."/>
            <person name="Fotopulos D."/>
            <person name="Garcia C."/>
            <person name="Georgescu A.M."/>
            <person name="Glavina T."/>
            <person name="Gomez M."/>
            <person name="Gonzales E."/>
            <person name="Groza M."/>
            <person name="Hammon N."/>
            <person name="Hawkins T."/>
            <person name="Haydu L."/>
            <person name="Ho I."/>
            <person name="Huang W."/>
            <person name="Israni S."/>
            <person name="Jett J."/>
            <person name="Kadner K."/>
            <person name="Kimball H."/>
            <person name="Kobayashi A."/>
            <person name="Larionov V."/>
            <person name="Leem S.-H."/>
            <person name="Lopez F."/>
            <person name="Lou Y."/>
            <person name="Lowry S."/>
            <person name="Malfatti S."/>
            <person name="Martinez D."/>
            <person name="McCready P.M."/>
            <person name="Medina C."/>
            <person name="Morgan J."/>
            <person name="Nelson K."/>
            <person name="Nolan M."/>
            <person name="Ovcharenko I."/>
            <person name="Pitluck S."/>
            <person name="Pollard M."/>
            <person name="Popkie A.P."/>
            <person name="Predki P."/>
            <person name="Quan G."/>
            <person name="Ramirez L."/>
            <person name="Rash S."/>
            <person name="Retterer J."/>
            <person name="Rodriguez A."/>
            <person name="Rogers S."/>
            <person name="Salamov A."/>
            <person name="Salazar A."/>
            <person name="She X."/>
            <person name="Smith D."/>
            <person name="Slezak T."/>
            <person name="Solovyev V."/>
            <person name="Thayer N."/>
            <person name="Tice H."/>
            <person name="Tsai M."/>
            <person name="Ustaszewska A."/>
            <person name="Vo N."/>
            <person name="Wagner M."/>
            <person name="Wheeler J."/>
            <person name="Wu K."/>
            <person name="Xie G."/>
            <person name="Yang J."/>
            <person name="Dubchak I."/>
            <person name="Furey T.S."/>
            <person name="DeJong P."/>
            <person name="Dickson M."/>
            <person name="Gordon D."/>
            <person name="Eichler E.E."/>
            <person name="Pennacchio L.A."/>
            <person name="Richardson P."/>
            <person name="Stubbs L."/>
            <person name="Rokhsar D.S."/>
            <person name="Myers R.M."/>
            <person name="Rubin E.M."/>
            <person name="Lucas S.M."/>
        </authorList>
    </citation>
    <scope>NUCLEOTIDE SEQUENCE [LARGE SCALE GENOMIC DNA]</scope>
</reference>
<reference key="5">
    <citation type="journal article" date="2004" name="Genome Res.">
        <title>The status, quality, and expansion of the NIH full-length cDNA project: the Mammalian Gene Collection (MGC).</title>
        <authorList>
            <consortium name="The MGC Project Team"/>
        </authorList>
    </citation>
    <scope>NUCLEOTIDE SEQUENCE [LARGE SCALE MRNA]</scope>
    <scope>VARIANTS HIS-36; GLU-320 AND SER-556</scope>
    <source>
        <tissue>Placenta</tissue>
    </source>
</reference>
<reference key="6">
    <citation type="journal article" date="2002" name="Nat. Cell Biol.">
        <title>A functional screen identifies hDRIL1 as an oncogene that rescues RAS-induced senescence.</title>
        <authorList>
            <person name="Peeper D.S."/>
            <person name="Shvarts A."/>
            <person name="Brummelkamp T."/>
            <person name="Douma S."/>
            <person name="Koh E.Y."/>
            <person name="Daley G.Q."/>
            <person name="Bernards R."/>
        </authorList>
    </citation>
    <scope>FUNCTION</scope>
</reference>
<reference key="7">
    <citation type="journal article" date="2003" name="Mol. Cancer Res.">
        <title>E2FBP1/DRIL1, an AT-rich interaction domain-family transcription factor, is regulated by p53.</title>
        <authorList>
            <person name="Ma K."/>
            <person name="Araki K."/>
            <person name="Ichwan S.J.A."/>
            <person name="Suganuma T."/>
            <person name="Tamamori-Adachi M."/>
            <person name="Ikeda M.-A."/>
        </authorList>
    </citation>
    <scope>FUNCTION</scope>
    <scope>INDUCTION</scope>
</reference>
<reference key="8">
    <citation type="journal article" date="2006" name="Cell">
        <title>Global, in vivo, and site-specific phosphorylation dynamics in signaling networks.</title>
        <authorList>
            <person name="Olsen J.V."/>
            <person name="Blagoev B."/>
            <person name="Gnad F."/>
            <person name="Macek B."/>
            <person name="Kumar C."/>
            <person name="Mortensen P."/>
            <person name="Mann M."/>
        </authorList>
    </citation>
    <scope>PHOSPHORYLATION [LARGE SCALE ANALYSIS] AT SER-77; SER-81 AND SER-88</scope>
    <scope>IDENTIFICATION BY MASS SPECTROMETRY [LARGE SCALE ANALYSIS]</scope>
    <source>
        <tissue>Cervix carcinoma</tissue>
    </source>
</reference>
<reference key="9">
    <citation type="journal article" date="2006" name="Mol. Cell. Biol.">
        <title>Induction of immunoglobulin heavy-chain transcription through the transcription factor Bright requires TFII-I.</title>
        <authorList>
            <person name="Rajaiya J."/>
            <person name="Nixon J.C."/>
            <person name="Ayers N."/>
            <person name="Desgranges Z.P."/>
            <person name="Roy A.L."/>
            <person name="Webb C.F."/>
        </authorList>
    </citation>
    <scope>INTERACTION WITH GTF2I AND BTK</scope>
    <scope>SUBUNIT</scope>
    <scope>DNA-BINDING</scope>
    <scope>MUTAGENESIS OF TYR-325</scope>
</reference>
<reference key="10">
    <citation type="journal article" date="2007" name="J. Biol. Chem.">
        <title>REKLES is an ARID3-restricted multifunctional domain.</title>
        <authorList>
            <person name="Kim D."/>
            <person name="Probst L."/>
            <person name="Das C."/>
            <person name="Tucker P.W."/>
        </authorList>
    </citation>
    <scope>INTERACTION WITH ARID3B</scope>
    <scope>DNA-BINDING</scope>
    <scope>SUBUNIT</scope>
    <scope>SUBCELLULAR LOCATION</scope>
    <scope>MUTAGENESIS OF LYS-461; GLY-527; TYR-530; GLY-532 AND LEU-534</scope>
</reference>
<reference key="11">
    <citation type="journal article" date="2008" name="Proc. Natl. Acad. Sci. U.S.A.">
        <title>A quantitative atlas of mitotic phosphorylation.</title>
        <authorList>
            <person name="Dephoure N."/>
            <person name="Zhou C."/>
            <person name="Villen J."/>
            <person name="Beausoleil S.A."/>
            <person name="Bakalarski C.E."/>
            <person name="Elledge S.J."/>
            <person name="Gygi S.P."/>
        </authorList>
    </citation>
    <scope>IDENTIFICATION BY MASS SPECTROMETRY [LARGE SCALE ANALYSIS]</scope>
    <source>
        <tissue>Cervix carcinoma</tissue>
    </source>
</reference>
<reference key="12">
    <citation type="journal article" date="2009" name="Anal. Chem.">
        <title>Lys-N and trypsin cover complementary parts of the phosphoproteome in a refined SCX-based approach.</title>
        <authorList>
            <person name="Gauci S."/>
            <person name="Helbig A.O."/>
            <person name="Slijper M."/>
            <person name="Krijgsveld J."/>
            <person name="Heck A.J."/>
            <person name="Mohammed S."/>
        </authorList>
    </citation>
    <scope>IDENTIFICATION BY MASS SPECTROMETRY [LARGE SCALE ANALYSIS]</scope>
</reference>
<reference key="13">
    <citation type="journal article" date="2009" name="Sci. Signal.">
        <title>Quantitative phosphoproteomic analysis of T cell receptor signaling reveals system-wide modulation of protein-protein interactions.</title>
        <authorList>
            <person name="Mayya V."/>
            <person name="Lundgren D.H."/>
            <person name="Hwang S.-I."/>
            <person name="Rezaul K."/>
            <person name="Wu L."/>
            <person name="Eng J.K."/>
            <person name="Rodionov V."/>
            <person name="Han D.K."/>
        </authorList>
    </citation>
    <scope>PHOSPHORYLATION [LARGE SCALE ANALYSIS] AT SER-77; SER-81 AND SER-88</scope>
    <scope>IDENTIFICATION BY MASS SPECTROMETRY [LARGE SCALE ANALYSIS]</scope>
    <source>
        <tissue>Leukemic T-cell</tissue>
    </source>
</reference>
<reference key="14">
    <citation type="journal article" date="2011" name="BMC Syst. Biol.">
        <title>Initial characterization of the human central proteome.</title>
        <authorList>
            <person name="Burkard T.R."/>
            <person name="Planyavsky M."/>
            <person name="Kaupe I."/>
            <person name="Breitwieser F.P."/>
            <person name="Buerckstuemmer T."/>
            <person name="Bennett K.L."/>
            <person name="Superti-Furga G."/>
            <person name="Colinge J."/>
        </authorList>
    </citation>
    <scope>IDENTIFICATION BY MASS SPECTROMETRY [LARGE SCALE ANALYSIS]</scope>
</reference>
<reference key="15">
    <citation type="journal article" date="2011" name="Sci. Signal.">
        <title>System-wide temporal characterization of the proteome and phosphoproteome of human embryonic stem cell differentiation.</title>
        <authorList>
            <person name="Rigbolt K.T."/>
            <person name="Prokhorova T.A."/>
            <person name="Akimov V."/>
            <person name="Henningsen J."/>
            <person name="Johansen P.T."/>
            <person name="Kratchmarova I."/>
            <person name="Kassem M."/>
            <person name="Mann M."/>
            <person name="Olsen J.V."/>
            <person name="Blagoev B."/>
        </authorList>
    </citation>
    <scope>PHOSPHORYLATION [LARGE SCALE ANALYSIS] AT SER-77; SER-88; THR-98; SER-101 AND SER-119</scope>
    <scope>IDENTIFICATION BY MASS SPECTROMETRY [LARGE SCALE ANALYSIS]</scope>
</reference>
<reference key="16">
    <citation type="journal article" date="2012" name="Proc. Natl. Acad. Sci. U.S.A.">
        <title>N-terminal acetylome analyses and functional insights of the N-terminal acetyltransferase NatB.</title>
        <authorList>
            <person name="Van Damme P."/>
            <person name="Lasa M."/>
            <person name="Polevoda B."/>
            <person name="Gazquez C."/>
            <person name="Elosegui-Artola A."/>
            <person name="Kim D.S."/>
            <person name="De Juan-Pardo E."/>
            <person name="Demeyer K."/>
            <person name="Hole K."/>
            <person name="Larrea E."/>
            <person name="Timmerman E."/>
            <person name="Prieto J."/>
            <person name="Arnesen T."/>
            <person name="Sherman F."/>
            <person name="Gevaert K."/>
            <person name="Aldabe R."/>
        </authorList>
    </citation>
    <scope>IDENTIFICATION BY MASS SPECTROMETRY [LARGE SCALE ANALYSIS]</scope>
</reference>
<reference key="17">
    <citation type="journal article" date="2013" name="J. Proteome Res.">
        <title>Toward a comprehensive characterization of a human cancer cell phosphoproteome.</title>
        <authorList>
            <person name="Zhou H."/>
            <person name="Di Palma S."/>
            <person name="Preisinger C."/>
            <person name="Peng M."/>
            <person name="Polat A.N."/>
            <person name="Heck A.J."/>
            <person name="Mohammed S."/>
        </authorList>
    </citation>
    <scope>PHOSPHORYLATION [LARGE SCALE ANALYSIS] AT SER-77; SER-81; SER-88; SER-119; SER-353 AND SER-362</scope>
    <scope>IDENTIFICATION BY MASS SPECTROMETRY [LARGE SCALE ANALYSIS]</scope>
    <source>
        <tissue>Cervix carcinoma</tissue>
        <tissue>Erythroleukemia</tissue>
    </source>
</reference>
<reference key="18">
    <citation type="journal article" date="2014" name="Nat. Struct. Mol. Biol.">
        <title>Uncovering global SUMOylation signaling networks in a site-specific manner.</title>
        <authorList>
            <person name="Hendriks I.A."/>
            <person name="D'Souza R.C."/>
            <person name="Yang B."/>
            <person name="Verlaan-de Vries M."/>
            <person name="Mann M."/>
            <person name="Vertegaal A.C."/>
        </authorList>
    </citation>
    <scope>SUMOYLATION [LARGE SCALE ANALYSIS] AT LYS-452 AND LYS-462</scope>
    <scope>IDENTIFICATION BY MASS SPECTROMETRY [LARGE SCALE ANALYSIS]</scope>
</reference>
<reference key="19">
    <citation type="journal article" date="2015" name="Mol. Cell. Proteomics">
        <title>System-wide analysis of SUMOylation dynamics in response to replication stress reveals novel small ubiquitin-like modified target proteins and acceptor lysines relevant for genome stability.</title>
        <authorList>
            <person name="Xiao Z."/>
            <person name="Chang J.G."/>
            <person name="Hendriks I.A."/>
            <person name="Sigurdsson J.O."/>
            <person name="Olsen J.V."/>
            <person name="Vertegaal A.C."/>
        </authorList>
    </citation>
    <scope>SUMOYLATION [LARGE SCALE ANALYSIS] AT LYS-462</scope>
    <scope>IDENTIFICATION BY MASS SPECTROMETRY [LARGE SCALE ANALYSIS]</scope>
</reference>
<reference key="20">
    <citation type="journal article" date="2017" name="Nat. Struct. Mol. Biol.">
        <title>Site-specific mapping of the human SUMO proteome reveals co-modification with phosphorylation.</title>
        <authorList>
            <person name="Hendriks I.A."/>
            <person name="Lyon D."/>
            <person name="Young C."/>
            <person name="Jensen L.J."/>
            <person name="Vertegaal A.C."/>
            <person name="Nielsen M.L."/>
        </authorList>
    </citation>
    <scope>SUMOYLATION [LARGE SCALE ANALYSIS] AT LYS-398; LYS-399 AND LYS-462</scope>
    <scope>IDENTIFICATION BY MASS SPECTROMETRY [LARGE SCALE ANALYSIS]</scope>
</reference>
<reference key="21">
    <citation type="journal article" date="2010" name="Proteins">
        <title>Solution NMR structure of the ARID domain of human AT-rich interactive domain-containing protein 3A: a human cancer protein interaction network target.</title>
        <authorList>
            <person name="Liu G."/>
            <person name="Huang Y.J."/>
            <person name="Xiao R."/>
            <person name="Wang D."/>
            <person name="Acton T.B."/>
            <person name="Montelione G.T."/>
        </authorList>
    </citation>
    <scope>STRUCTURE BY NMR OF 218-351</scope>
</reference>
<protein>
    <recommendedName>
        <fullName>AT-rich interactive domain-containing protein 3A</fullName>
        <shortName>ARID domain-containing protein 3A</shortName>
    </recommendedName>
    <alternativeName>
        <fullName>B-cell regulator of IgH transcription</fullName>
        <shortName>Bright</shortName>
    </alternativeName>
    <alternativeName>
        <fullName>Dead ringer-like protein 1</fullName>
    </alternativeName>
    <alternativeName>
        <fullName>E2F-binding protein 1</fullName>
    </alternativeName>
</protein>
<feature type="chain" id="PRO_0000200578" description="AT-rich interactive domain-containing protein 3A">
    <location>
        <begin position="1"/>
        <end position="593"/>
    </location>
</feature>
<feature type="domain" description="ARID" evidence="2">
    <location>
        <begin position="238"/>
        <end position="330"/>
    </location>
</feature>
<feature type="domain" description="REKLES" evidence="3">
    <location>
        <begin position="444"/>
        <end position="541"/>
    </location>
</feature>
<feature type="region of interest" description="Disordered" evidence="4">
    <location>
        <begin position="14"/>
        <end position="222"/>
    </location>
</feature>
<feature type="region of interest" description="Acidic">
    <location>
        <begin position="119"/>
        <end position="156"/>
    </location>
</feature>
<feature type="region of interest" description="Important for nuclear localization" evidence="1">
    <location>
        <begin position="445"/>
        <end position="488"/>
    </location>
</feature>
<feature type="region of interest" description="Homodimerization">
    <location>
        <begin position="490"/>
        <end position="513"/>
    </location>
</feature>
<feature type="region of interest" description="Disordered" evidence="4">
    <location>
        <begin position="497"/>
        <end position="516"/>
    </location>
</feature>
<feature type="region of interest" description="Important for cytoplasmic localization" evidence="1">
    <location>
        <begin position="537"/>
        <end position="557"/>
    </location>
</feature>
<feature type="region of interest" description="Disordered" evidence="4">
    <location>
        <begin position="539"/>
        <end position="593"/>
    </location>
</feature>
<feature type="compositionally biased region" description="Basic and acidic residues" evidence="4">
    <location>
        <begin position="41"/>
        <end position="53"/>
    </location>
</feature>
<feature type="compositionally biased region" description="Low complexity" evidence="4">
    <location>
        <begin position="54"/>
        <end position="87"/>
    </location>
</feature>
<feature type="compositionally biased region" description="Basic and acidic residues" evidence="4">
    <location>
        <begin position="104"/>
        <end position="127"/>
    </location>
</feature>
<feature type="compositionally biased region" description="Acidic residues" evidence="4">
    <location>
        <begin position="128"/>
        <end position="158"/>
    </location>
</feature>
<feature type="compositionally biased region" description="Gly residues" evidence="4">
    <location>
        <begin position="549"/>
        <end position="576"/>
    </location>
</feature>
<feature type="compositionally biased region" description="Low complexity" evidence="4">
    <location>
        <begin position="580"/>
        <end position="593"/>
    </location>
</feature>
<feature type="modified residue" description="Phosphoserine" evidence="12 13 14 15">
    <location>
        <position position="77"/>
    </location>
</feature>
<feature type="modified residue" description="Phosphoserine" evidence="12 13 15">
    <location>
        <position position="81"/>
    </location>
</feature>
<feature type="modified residue" description="Phosphoserine" evidence="12 13 14 15">
    <location>
        <position position="88"/>
    </location>
</feature>
<feature type="modified residue" description="Phosphothreonine" evidence="14">
    <location>
        <position position="98"/>
    </location>
</feature>
<feature type="modified residue" description="Phosphoserine" evidence="14">
    <location>
        <position position="101"/>
    </location>
</feature>
<feature type="modified residue" description="Phosphoserine" evidence="14 15">
    <location>
        <position position="119"/>
    </location>
</feature>
<feature type="modified residue" description="Phosphoserine" evidence="15">
    <location>
        <position position="353"/>
    </location>
</feature>
<feature type="modified residue" description="Phosphoserine" evidence="15">
    <location>
        <position position="362"/>
    </location>
</feature>
<feature type="cross-link" description="Glycyl lysine isopeptide (Lys-Gly) (interchain with G-Cter in SUMO2)" evidence="18">
    <location>
        <position position="398"/>
    </location>
</feature>
<feature type="cross-link" description="Glycyl lysine isopeptide (Lys-Gly) (interchain with G-Cter in SUMO2)" evidence="18">
    <location>
        <position position="399"/>
    </location>
</feature>
<feature type="cross-link" description="Glycyl lysine isopeptide (Lys-Gly) (interchain with G-Cter in SUMO2)" evidence="16">
    <location>
        <position position="452"/>
    </location>
</feature>
<feature type="cross-link" description="Glycyl lysine isopeptide (Lys-Gly) (interchain with G-Cter in SUMO2)" evidence="16 17 18">
    <location>
        <position position="462"/>
    </location>
</feature>
<feature type="sequence variant" id="VAR_033203" description="In dbSNP:rs17857499." evidence="7">
    <original>P</original>
    <variation>H</variation>
    <location>
        <position position="36"/>
    </location>
</feature>
<feature type="sequence variant" id="VAR_033204" description="In dbSNP:rs17857501." evidence="7">
    <original>K</original>
    <variation>E</variation>
    <location>
        <position position="320"/>
    </location>
</feature>
<feature type="sequence variant" id="VAR_033205" description="In dbSNP:rs1051505." evidence="7 10">
    <original>G</original>
    <variation>S</variation>
    <location>
        <position position="556"/>
    </location>
</feature>
<feature type="mutagenesis site" description="Abolishes DNA-binding." evidence="8">
    <original>Y</original>
    <variation>A</variation>
    <location>
        <position position="325"/>
    </location>
</feature>
<feature type="mutagenesis site" description="Abolishes nuclear targeting." evidence="9">
    <original>K</original>
    <variation>A</variation>
    <location>
        <position position="461"/>
    </location>
</feature>
<feature type="mutagenesis site" description="Impairs DNA-binding but not self-association." evidence="9">
    <original>G</original>
    <variation>A</variation>
    <variation>P</variation>
    <location>
        <position position="527"/>
    </location>
</feature>
<feature type="mutagenesis site" description="Impairs DNA-binding but not self-association." evidence="9">
    <original>Y</original>
    <variation>A</variation>
    <location>
        <position position="530"/>
    </location>
</feature>
<feature type="mutagenesis site" description="No effect on DNA-binding." evidence="9">
    <original>Y</original>
    <variation>F</variation>
    <location>
        <position position="530"/>
    </location>
</feature>
<feature type="mutagenesis site" description="Impairs DNA-binding." evidence="9">
    <original>G</original>
    <variation>A</variation>
    <location>
        <position position="532"/>
    </location>
</feature>
<feature type="mutagenesis site" description="Impairs DNA-binding." evidence="9">
    <original>L</original>
    <variation>A</variation>
    <location>
        <position position="534"/>
    </location>
</feature>
<feature type="sequence conflict" description="In Ref. 2; AAN74028." evidence="11" ref="2">
    <original>V</original>
    <variation>S</variation>
    <location>
        <position position="423"/>
    </location>
</feature>
<feature type="helix" evidence="19">
    <location>
        <begin position="225"/>
        <end position="228"/>
    </location>
</feature>
<feature type="helix" evidence="19">
    <location>
        <begin position="230"/>
        <end position="233"/>
    </location>
</feature>
<feature type="helix" evidence="19">
    <location>
        <begin position="239"/>
        <end position="255"/>
    </location>
</feature>
<feature type="helix" evidence="19">
    <location>
        <begin position="272"/>
        <end position="281"/>
    </location>
</feature>
<feature type="helix" evidence="19">
    <location>
        <begin position="285"/>
        <end position="291"/>
    </location>
</feature>
<feature type="helix" evidence="19">
    <location>
        <begin position="294"/>
        <end position="300"/>
    </location>
</feature>
<feature type="helix" evidence="19">
    <location>
        <begin position="310"/>
        <end position="321"/>
    </location>
</feature>
<feature type="helix" evidence="19">
    <location>
        <begin position="323"/>
        <end position="329"/>
    </location>
</feature>
<feature type="helix" evidence="19">
    <location>
        <begin position="335"/>
        <end position="343"/>
    </location>
</feature>